<proteinExistence type="evidence at protein level"/>
<protein>
    <recommendedName>
        <fullName evidence="1">CRISPR-associated endoribonuclease Cas2</fullName>
        <ecNumber evidence="1">3.1.-.-</ecNumber>
    </recommendedName>
</protein>
<sequence>MRVIVFFDLPVITPENRHNYSVFRKYLIKSGFIMQQKSVYSKLVLNLTNRDSIVKSIEKNKPPEGLVEVLTVTEKQYAKMEIIIGESKTEYLNTDERLVVL</sequence>
<dbReference type="EC" id="3.1.-.-" evidence="1"/>
<dbReference type="EMBL" id="AE017226">
    <property type="protein sequence ID" value="AAS10824.1"/>
    <property type="molecule type" value="Genomic_DNA"/>
</dbReference>
<dbReference type="RefSeq" id="NP_970943.1">
    <property type="nucleotide sequence ID" value="NC_002967.9"/>
</dbReference>
<dbReference type="RefSeq" id="WP_002666293.1">
    <property type="nucleotide sequence ID" value="NC_002967.9"/>
</dbReference>
<dbReference type="PDB" id="6JHZ">
    <property type="method" value="X-ray"/>
    <property type="resolution" value="2.00 A"/>
    <property type="chains" value="A/B=1-93"/>
</dbReference>
<dbReference type="PDB" id="8IA4">
    <property type="method" value="X-ray"/>
    <property type="resolution" value="2.00 A"/>
    <property type="chains" value="A/B=1-101"/>
</dbReference>
<dbReference type="PDBsum" id="6JHZ"/>
<dbReference type="PDBsum" id="8IA4"/>
<dbReference type="SMR" id="Q73QW4"/>
<dbReference type="STRING" id="243275.TDE_0329"/>
<dbReference type="PaxDb" id="243275-TDE_0329"/>
<dbReference type="DNASU" id="2741545"/>
<dbReference type="GeneID" id="2741545"/>
<dbReference type="KEGG" id="tde:TDE_0329"/>
<dbReference type="PATRIC" id="fig|243275.7.peg.318"/>
<dbReference type="eggNOG" id="COG3512">
    <property type="taxonomic scope" value="Bacteria"/>
</dbReference>
<dbReference type="HOGENOM" id="CLU_150500_1_1_12"/>
<dbReference type="OrthoDB" id="9791737at2"/>
<dbReference type="Proteomes" id="UP000008212">
    <property type="component" value="Chromosome"/>
</dbReference>
<dbReference type="GO" id="GO:0046872">
    <property type="term" value="F:metal ion binding"/>
    <property type="evidence" value="ECO:0007669"/>
    <property type="project" value="UniProtKB-UniRule"/>
</dbReference>
<dbReference type="GO" id="GO:0004521">
    <property type="term" value="F:RNA endonuclease activity"/>
    <property type="evidence" value="ECO:0007669"/>
    <property type="project" value="InterPro"/>
</dbReference>
<dbReference type="GO" id="GO:0051607">
    <property type="term" value="P:defense response to virus"/>
    <property type="evidence" value="ECO:0007669"/>
    <property type="project" value="UniProtKB-UniRule"/>
</dbReference>
<dbReference type="GO" id="GO:0043571">
    <property type="term" value="P:maintenance of CRISPR repeat elements"/>
    <property type="evidence" value="ECO:0007669"/>
    <property type="project" value="UniProtKB-UniRule"/>
</dbReference>
<dbReference type="HAMAP" id="MF_01471">
    <property type="entry name" value="Cas2"/>
    <property type="match status" value="1"/>
</dbReference>
<dbReference type="InterPro" id="IPR021127">
    <property type="entry name" value="CRISPR_associated_Cas2"/>
</dbReference>
<dbReference type="InterPro" id="IPR019199">
    <property type="entry name" value="Virulence_VapD/CRISPR_Cas2"/>
</dbReference>
<dbReference type="NCBIfam" id="TIGR01573">
    <property type="entry name" value="cas2"/>
    <property type="match status" value="1"/>
</dbReference>
<dbReference type="Pfam" id="PF09827">
    <property type="entry name" value="CRISPR_Cas2"/>
    <property type="match status" value="1"/>
</dbReference>
<dbReference type="SUPFAM" id="SSF143430">
    <property type="entry name" value="TTP0101/SSO1404-like"/>
    <property type="match status" value="1"/>
</dbReference>
<gene>
    <name evidence="1" type="primary">cas2</name>
    <name type="ordered locus">TDE_0329</name>
</gene>
<comment type="function">
    <text evidence="1">CRISPR (clustered regularly interspaced short palindromic repeat), is an adaptive immune system that provides protection against mobile genetic elements (viruses, transposable elements and conjugative plasmids). CRISPR clusters contain sequences complementary to antecedent mobile elements and target invading nucleic acids. CRISPR clusters are transcribed and processed into CRISPR RNA (crRNA). Functions as a ssRNA-specific endoribonuclease. Involved in the integration of spacer DNA into the CRISPR cassette.</text>
</comment>
<comment type="cofactor">
    <cofactor evidence="1">
        <name>Mg(2+)</name>
        <dbReference type="ChEBI" id="CHEBI:18420"/>
    </cofactor>
</comment>
<comment type="subunit">
    <text evidence="1">Homodimer, forms a heterotetramer with a Cas1 homodimer.</text>
</comment>
<comment type="similarity">
    <text evidence="1">Belongs to the CRISPR-associated endoribonuclease Cas2 protein family.</text>
</comment>
<evidence type="ECO:0000255" key="1">
    <source>
        <dbReference type="HAMAP-Rule" id="MF_01471"/>
    </source>
</evidence>
<evidence type="ECO:0007829" key="2">
    <source>
        <dbReference type="PDB" id="6JHZ"/>
    </source>
</evidence>
<name>CAS2_TREDE</name>
<accession>Q73QW4</accession>
<feature type="chain" id="PRO_0000417739" description="CRISPR-associated endoribonuclease Cas2">
    <location>
        <begin position="1"/>
        <end position="101"/>
    </location>
</feature>
<feature type="binding site" evidence="1">
    <location>
        <position position="8"/>
    </location>
    <ligand>
        <name>Mg(2+)</name>
        <dbReference type="ChEBI" id="CHEBI:18420"/>
        <note>catalytic</note>
    </ligand>
</feature>
<feature type="strand" evidence="2">
    <location>
        <begin position="2"/>
        <end position="8"/>
    </location>
</feature>
<feature type="helix" evidence="2">
    <location>
        <begin position="14"/>
        <end position="29"/>
    </location>
</feature>
<feature type="strand" evidence="2">
    <location>
        <begin position="33"/>
        <end position="36"/>
    </location>
</feature>
<feature type="strand" evidence="2">
    <location>
        <begin position="39"/>
        <end position="43"/>
    </location>
</feature>
<feature type="helix" evidence="2">
    <location>
        <begin position="47"/>
        <end position="59"/>
    </location>
</feature>
<feature type="strand" evidence="2">
    <location>
        <begin position="63"/>
        <end position="72"/>
    </location>
</feature>
<feature type="helix" evidence="2">
    <location>
        <begin position="74"/>
        <end position="78"/>
    </location>
</feature>
<feature type="strand" evidence="2">
    <location>
        <begin position="81"/>
        <end position="84"/>
    </location>
</feature>
<keyword id="KW-0002">3D-structure</keyword>
<keyword id="KW-0051">Antiviral defense</keyword>
<keyword id="KW-0255">Endonuclease</keyword>
<keyword id="KW-0378">Hydrolase</keyword>
<keyword id="KW-0460">Magnesium</keyword>
<keyword id="KW-0479">Metal-binding</keyword>
<keyword id="KW-0540">Nuclease</keyword>
<keyword id="KW-1185">Reference proteome</keyword>
<organism>
    <name type="scientific">Treponema denticola (strain ATCC 35405 / DSM 14222 / CIP 103919 / JCM 8153 / KCTC 15104)</name>
    <dbReference type="NCBI Taxonomy" id="243275"/>
    <lineage>
        <taxon>Bacteria</taxon>
        <taxon>Pseudomonadati</taxon>
        <taxon>Spirochaetota</taxon>
        <taxon>Spirochaetia</taxon>
        <taxon>Spirochaetales</taxon>
        <taxon>Treponemataceae</taxon>
        <taxon>Treponema</taxon>
    </lineage>
</organism>
<reference key="1">
    <citation type="journal article" date="2004" name="Proc. Natl. Acad. Sci. U.S.A.">
        <title>Comparison of the genome of the oral pathogen Treponema denticola with other spirochete genomes.</title>
        <authorList>
            <person name="Seshadri R."/>
            <person name="Myers G.S.A."/>
            <person name="Tettelin H."/>
            <person name="Eisen J.A."/>
            <person name="Heidelberg J.F."/>
            <person name="Dodson R.J."/>
            <person name="Davidsen T.M."/>
            <person name="DeBoy R.T."/>
            <person name="Fouts D.E."/>
            <person name="Haft D.H."/>
            <person name="Selengut J."/>
            <person name="Ren Q."/>
            <person name="Brinkac L.M."/>
            <person name="Madupu R."/>
            <person name="Kolonay J.F."/>
            <person name="Durkin S.A."/>
            <person name="Daugherty S.C."/>
            <person name="Shetty J."/>
            <person name="Shvartsbeyn A."/>
            <person name="Gebregeorgis E."/>
            <person name="Geer K."/>
            <person name="Tsegaye G."/>
            <person name="Malek J.A."/>
            <person name="Ayodeji B."/>
            <person name="Shatsman S."/>
            <person name="McLeod M.P."/>
            <person name="Smajs D."/>
            <person name="Howell J.K."/>
            <person name="Pal S."/>
            <person name="Amin A."/>
            <person name="Vashisth P."/>
            <person name="McNeill T.Z."/>
            <person name="Xiang Q."/>
            <person name="Sodergren E."/>
            <person name="Baca E."/>
            <person name="Weinstock G.M."/>
            <person name="Norris S.J."/>
            <person name="Fraser C.M."/>
            <person name="Paulsen I.T."/>
        </authorList>
    </citation>
    <scope>NUCLEOTIDE SEQUENCE [LARGE SCALE GENOMIC DNA]</scope>
    <source>
        <strain>ATCC 35405 / DSM 14222 / CIP 103919 / JCM 8153 / KCTC 15104</strain>
    </source>
</reference>